<proteinExistence type="evidence at protein level"/>
<feature type="chain" id="PRO_0000454341" description="PAM2 domain-containing protein UPA2">
    <location>
        <begin position="1"/>
        <end position="2121"/>
    </location>
</feature>
<feature type="region of interest" description="Disordered" evidence="1">
    <location>
        <begin position="14"/>
        <end position="46"/>
    </location>
</feature>
<feature type="region of interest" description="Disordered" evidence="1">
    <location>
        <begin position="262"/>
        <end position="302"/>
    </location>
</feature>
<feature type="region of interest" description="Effector domain" evidence="2">
    <location>
        <begin position="339"/>
        <end position="599"/>
    </location>
</feature>
<feature type="region of interest" description="Disordered" evidence="1">
    <location>
        <begin position="375"/>
        <end position="397"/>
    </location>
</feature>
<feature type="region of interest" description="Disordered" evidence="1">
    <location>
        <begin position="475"/>
        <end position="507"/>
    </location>
</feature>
<feature type="region of interest" description="Disordered" evidence="1">
    <location>
        <begin position="522"/>
        <end position="543"/>
    </location>
</feature>
<feature type="region of interest" description="Disordered" evidence="1">
    <location>
        <begin position="586"/>
        <end position="819"/>
    </location>
</feature>
<feature type="region of interest" description="Disordered" evidence="1">
    <location>
        <begin position="950"/>
        <end position="1012"/>
    </location>
</feature>
<feature type="region of interest" description="Disordered" evidence="1">
    <location>
        <begin position="1076"/>
        <end position="1096"/>
    </location>
</feature>
<feature type="region of interest" description="Disordered" evidence="1">
    <location>
        <begin position="1119"/>
        <end position="1261"/>
    </location>
</feature>
<feature type="region of interest" description="Disordered" evidence="1">
    <location>
        <begin position="1337"/>
        <end position="1369"/>
    </location>
</feature>
<feature type="region of interest" description="Disordered" evidence="1">
    <location>
        <begin position="2099"/>
        <end position="2121"/>
    </location>
</feature>
<feature type="coiled-coil region" evidence="5">
    <location>
        <begin position="1783"/>
        <end position="2054"/>
    </location>
</feature>
<feature type="short sequence motif" description="PAM2 1" evidence="3">
    <location>
        <begin position="1"/>
        <end position="17"/>
    </location>
</feature>
<feature type="short sequence motif" description="PAM2 2" evidence="3">
    <location>
        <begin position="858"/>
        <end position="874"/>
    </location>
</feature>
<feature type="short sequence motif" description="PAM2 3" evidence="3">
    <location>
        <begin position="920"/>
        <end position="937"/>
    </location>
</feature>
<feature type="short sequence motif" description="PAM2 4" evidence="3">
    <location>
        <begin position="1046"/>
        <end position="1063"/>
    </location>
</feature>
<feature type="short sequence motif" description="GWW" evidence="2">
    <location>
        <begin position="2118"/>
        <end position="2120"/>
    </location>
</feature>
<feature type="compositionally biased region" description="Polar residues" evidence="1">
    <location>
        <begin position="596"/>
        <end position="607"/>
    </location>
</feature>
<feature type="compositionally biased region" description="Acidic residues" evidence="1">
    <location>
        <begin position="626"/>
        <end position="637"/>
    </location>
</feature>
<feature type="compositionally biased region" description="Acidic residues" evidence="1">
    <location>
        <begin position="646"/>
        <end position="658"/>
    </location>
</feature>
<feature type="compositionally biased region" description="Basic and acidic residues" evidence="1">
    <location>
        <begin position="679"/>
        <end position="689"/>
    </location>
</feature>
<feature type="compositionally biased region" description="Polar residues" evidence="1">
    <location>
        <begin position="690"/>
        <end position="712"/>
    </location>
</feature>
<feature type="compositionally biased region" description="Basic and acidic residues" evidence="1">
    <location>
        <begin position="719"/>
        <end position="735"/>
    </location>
</feature>
<feature type="compositionally biased region" description="Basic residues" evidence="1">
    <location>
        <begin position="736"/>
        <end position="745"/>
    </location>
</feature>
<feature type="compositionally biased region" description="Polar residues" evidence="1">
    <location>
        <begin position="749"/>
        <end position="758"/>
    </location>
</feature>
<feature type="compositionally biased region" description="Polar residues" evidence="1">
    <location>
        <begin position="777"/>
        <end position="788"/>
    </location>
</feature>
<feature type="compositionally biased region" description="Polar residues" evidence="1">
    <location>
        <begin position="950"/>
        <end position="960"/>
    </location>
</feature>
<feature type="compositionally biased region" description="Basic and acidic residues" evidence="1">
    <location>
        <begin position="966"/>
        <end position="981"/>
    </location>
</feature>
<feature type="compositionally biased region" description="Polar residues" evidence="1">
    <location>
        <begin position="1198"/>
        <end position="1207"/>
    </location>
</feature>
<feature type="compositionally biased region" description="Acidic residues" evidence="1">
    <location>
        <begin position="1248"/>
        <end position="1261"/>
    </location>
</feature>
<feature type="compositionally biased region" description="Polar residues" evidence="1">
    <location>
        <begin position="1345"/>
        <end position="1369"/>
    </location>
</feature>
<feature type="mutagenesis site" description="Resulted in loss of shuttling." evidence="2">
    <original>GWW</original>
    <variation>AAA</variation>
    <location>
        <begin position="2118"/>
        <end position="2120"/>
    </location>
</feature>
<evidence type="ECO:0000256" key="1">
    <source>
        <dbReference type="SAM" id="MobiDB-lite"/>
    </source>
</evidence>
<evidence type="ECO:0000269" key="2">
    <source>
    </source>
</evidence>
<evidence type="ECO:0000303" key="3">
    <source>
    </source>
</evidence>
<evidence type="ECO:0000305" key="4"/>
<evidence type="ECO:0000305" key="5">
    <source>
    </source>
</evidence>
<dbReference type="EMBL" id="CM003157">
    <property type="protein sequence ID" value="KIS66526.1"/>
    <property type="molecule type" value="Genomic_DNA"/>
</dbReference>
<dbReference type="RefSeq" id="XP_011391917.1">
    <property type="nucleotide sequence ID" value="XM_011393615.1"/>
</dbReference>
<dbReference type="SMR" id="A0A0D1DRJ3"/>
<dbReference type="STRING" id="237631.A0A0D1DRJ3"/>
<dbReference type="EnsemblFungi" id="KIS66526">
    <property type="protein sequence ID" value="KIS66526"/>
    <property type="gene ID" value="UMAG_10350"/>
</dbReference>
<dbReference type="GeneID" id="23566393"/>
<dbReference type="KEGG" id="uma:UMAG_10350"/>
<dbReference type="VEuPathDB" id="FungiDB:UMAG_10350"/>
<dbReference type="eggNOG" id="ENOG502SDVW">
    <property type="taxonomic scope" value="Eukaryota"/>
</dbReference>
<dbReference type="InParanoid" id="A0A0D1DRJ3"/>
<dbReference type="OrthoDB" id="3357224at2759"/>
<dbReference type="Proteomes" id="UP000000561">
    <property type="component" value="Chromosome 18"/>
</dbReference>
<dbReference type="GO" id="GO:0005856">
    <property type="term" value="C:cytoskeleton"/>
    <property type="evidence" value="ECO:0007669"/>
    <property type="project" value="UniProtKB-SubCell"/>
</dbReference>
<dbReference type="GO" id="GO:0005768">
    <property type="term" value="C:endosome"/>
    <property type="evidence" value="ECO:0007669"/>
    <property type="project" value="UniProtKB-SubCell"/>
</dbReference>
<dbReference type="GO" id="GO:0051028">
    <property type="term" value="P:mRNA transport"/>
    <property type="evidence" value="ECO:0007669"/>
    <property type="project" value="UniProtKB-KW"/>
</dbReference>
<name>UPA2_MYCMD</name>
<comment type="function">
    <text evidence="2">Core component of endosomal mRNA transport and appears to carry out crucial scaffolding functions (PubMed:31338952). The endosomal mRNA transport regulates polarity of the infectious hyphae by transporting a broad spectrum of cargo mRNAs from the nucleus to cell poles (PubMed:31338952).</text>
</comment>
<comment type="subunit">
    <text evidence="2 5">Might form homodimers via its C-terminal coiled-coil domain (Probable). Part of large ribonucleoprotein complexes (mRNPs) containing RNA-binding proteins RRM4 and PAB1, endosome-binding protein UPA1, core scaffold protein UPA2 and associated factor GRP1 (PubMed:31338952). Interacts (via PAM2 motifs) with PAB1 (PubMed:31338952).</text>
</comment>
<comment type="subcellular location">
    <subcellularLocation>
        <location evidence="2">Cytoplasm</location>
        <location evidence="2">Cytoskeleton</location>
    </subcellularLocation>
    <subcellularLocation>
        <location evidence="2">Endosome</location>
    </subcellularLocation>
    <text evidence="2">Shuttles with RRM4-positive transport endosomes along microtubules (PubMed:31338952). Rhe endosomal localization depends on the RNA-binding capacity of RRM4 (PubMed:31338952).</text>
</comment>
<comment type="domain">
    <text evidence="2">The PAM2 motifs are involved in the binding to PAB1.</text>
</comment>
<comment type="domain">
    <text evidence="2">The effector domain (residues 339 to 599) is important for endosomal mRNA transport.</text>
</comment>
<comment type="domain">
    <text evidence="5">The C-terminal coiled-coil domain might be involved in dimerization.</text>
</comment>
<comment type="domain">
    <text evidence="2">the conserved C-terminal GWW motif is essential for endosomal localization andwhich in turn is important for the function of the protein.</text>
</comment>
<comment type="disruption phenotype">
    <text evidence="2">Causes defects in the formation of endosomal mRNPs and exhibits a bipolar growth phenotype.</text>
</comment>
<comment type="similarity">
    <text evidence="4">Belongs to the UPA1 PAM2 domain-binding protein family.</text>
</comment>
<organism>
    <name type="scientific">Mycosarcoma maydis</name>
    <name type="common">Corn smut fungus</name>
    <name type="synonym">Ustilago maydis</name>
    <dbReference type="NCBI Taxonomy" id="5270"/>
    <lineage>
        <taxon>Eukaryota</taxon>
        <taxon>Fungi</taxon>
        <taxon>Dikarya</taxon>
        <taxon>Basidiomycota</taxon>
        <taxon>Ustilaginomycotina</taxon>
        <taxon>Ustilaginomycetes</taxon>
        <taxon>Ustilaginales</taxon>
        <taxon>Ustilaginaceae</taxon>
        <taxon>Mycosarcoma</taxon>
    </lineage>
</organism>
<reference key="1">
    <citation type="journal article" date="2006" name="Nature">
        <title>Insights from the genome of the biotrophic fungal plant pathogen Ustilago maydis.</title>
        <authorList>
            <person name="Kaemper J."/>
            <person name="Kahmann R."/>
            <person name="Boelker M."/>
            <person name="Ma L.-J."/>
            <person name="Brefort T."/>
            <person name="Saville B.J."/>
            <person name="Banuett F."/>
            <person name="Kronstad J.W."/>
            <person name="Gold S.E."/>
            <person name="Mueller O."/>
            <person name="Perlin M.H."/>
            <person name="Woesten H.A.B."/>
            <person name="de Vries R."/>
            <person name="Ruiz-Herrera J."/>
            <person name="Reynaga-Pena C.G."/>
            <person name="Snetselaar K."/>
            <person name="McCann M."/>
            <person name="Perez-Martin J."/>
            <person name="Feldbruegge M."/>
            <person name="Basse C.W."/>
            <person name="Steinberg G."/>
            <person name="Ibeas J.I."/>
            <person name="Holloman W."/>
            <person name="Guzman P."/>
            <person name="Farman M.L."/>
            <person name="Stajich J.E."/>
            <person name="Sentandreu R."/>
            <person name="Gonzalez-Prieto J.M."/>
            <person name="Kennell J.C."/>
            <person name="Molina L."/>
            <person name="Schirawski J."/>
            <person name="Mendoza-Mendoza A."/>
            <person name="Greilinger D."/>
            <person name="Muench K."/>
            <person name="Roessel N."/>
            <person name="Scherer M."/>
            <person name="Vranes M."/>
            <person name="Ladendorf O."/>
            <person name="Vincon V."/>
            <person name="Fuchs U."/>
            <person name="Sandrock B."/>
            <person name="Meng S."/>
            <person name="Ho E.C.H."/>
            <person name="Cahill M.J."/>
            <person name="Boyce K.J."/>
            <person name="Klose J."/>
            <person name="Klosterman S.J."/>
            <person name="Deelstra H.J."/>
            <person name="Ortiz-Castellanos L."/>
            <person name="Li W."/>
            <person name="Sanchez-Alonso P."/>
            <person name="Schreier P.H."/>
            <person name="Haeuser-Hahn I."/>
            <person name="Vaupel M."/>
            <person name="Koopmann E."/>
            <person name="Friedrich G."/>
            <person name="Voss H."/>
            <person name="Schlueter T."/>
            <person name="Margolis J."/>
            <person name="Platt D."/>
            <person name="Swimmer C."/>
            <person name="Gnirke A."/>
            <person name="Chen F."/>
            <person name="Vysotskaia V."/>
            <person name="Mannhaupt G."/>
            <person name="Gueldener U."/>
            <person name="Muensterkoetter M."/>
            <person name="Haase D."/>
            <person name="Oesterheld M."/>
            <person name="Mewes H.-W."/>
            <person name="Mauceli E.W."/>
            <person name="DeCaprio D."/>
            <person name="Wade C.M."/>
            <person name="Butler J."/>
            <person name="Young S.K."/>
            <person name="Jaffe D.B."/>
            <person name="Calvo S.E."/>
            <person name="Nusbaum C."/>
            <person name="Galagan J.E."/>
            <person name="Birren B.W."/>
        </authorList>
    </citation>
    <scope>NUCLEOTIDE SEQUENCE [LARGE SCALE GENOMIC DNA]</scope>
    <source>
        <strain>DSM 14603 / FGSC 9021 / UM521</strain>
    </source>
</reference>
<reference key="2">
    <citation type="submission" date="2014-09" db="EMBL/GenBank/DDBJ databases">
        <authorList>
            <person name="Gueldener U."/>
            <person name="Muensterkoetter M."/>
            <person name="Walter M.C."/>
            <person name="Mannhaupt G."/>
            <person name="Kahmann R."/>
        </authorList>
    </citation>
    <scope>GENOME REANNOTATION</scope>
    <source>
        <strain>DSM 14603 / FGSC 9021 / UM521</strain>
    </source>
</reference>
<reference key="3">
    <citation type="journal article" date="2019" name="EMBO Rep.">
        <title>The multi PAM2 protein Upa2 functions as novel core component of endosomal mRNA transport.</title>
        <authorList>
            <person name="Jankowski S."/>
            <person name="Pohlmann T."/>
            <person name="Baumann S."/>
            <person name="Muentjes K."/>
            <person name="Devan S.K."/>
            <person name="Zander S."/>
            <person name="Feldbruegge M."/>
        </authorList>
    </citation>
    <scope>FUNCTION</scope>
    <scope>DOMAIN</scope>
    <scope>INTERACTION WITH PAB1</scope>
    <scope>DISRUPTION PHENOTYPE</scope>
    <scope>SUBCELLULAR LOCATION</scope>
    <scope>MUTAGENESIS OF 2118-GLY--TRP-2120</scope>
</reference>
<gene>
    <name evidence="3" type="primary">UPA2</name>
    <name type="ORF">UMAG_10350</name>
</gene>
<protein>
    <recommendedName>
        <fullName evidence="3">PAM2 domain-containing protein UPA2</fullName>
    </recommendedName>
</protein>
<keyword id="KW-0175">Coiled coil</keyword>
<keyword id="KW-0963">Cytoplasm</keyword>
<keyword id="KW-0206">Cytoskeleton</keyword>
<keyword id="KW-0967">Endosome</keyword>
<keyword id="KW-0509">mRNA transport</keyword>
<keyword id="KW-1185">Reference proteome</keyword>
<keyword id="KW-0813">Transport</keyword>
<sequence length="2121" mass="231852">MEGSSLNVAAPVFKPSGAANSFTPAPSQPAPPTLLSSSGPDAAVHAPDHLSPSTMLSQIQNQMASGGGVPGGMIHMNASSRPFVPGTAVKPSIVEPPTPIPYHPPLSSFANASRSPVPQHRLGHALNPGSVQLTGLPTFLATPPVINHMPHMSRSPSYTGPPSPISPNFSGAASPFVMPPAQMSYGLPLPAGLMNGNMKPRRAKGLPPVTPLKTTGHNSTPSISMNPAAFAANLAALKARKKVVVCLPAEQLLPDDEALLAQPEDESLGEEVKSDVDGVETGARASEPGSAKSRHARASALTRSRWVQRQPLSSDKHDLVPFFEAPREEIVTCDIHPEPWPYSLGLPDTIEIYLPGMSAWDEYLELRYEEQQMEAATTDHEPRSPLAHQGIPLPPSTAGFTFDRRGRSLSISTPADPGMVTFKLNRFLESQQQQLSQYDSDQVCGLDSAQNFGDADKPFGRFQTDLPNRLREAFARRRGDSSDLNLRPSLKTTHNHTMSLGLPSSGGPFGPEVFSALDMIRANSDEGPSKPPSEAQDLPQKPLSDTEAFAGKSEIYLSNIAEEDGEQEPSAELAVEGHTRVGSWKDLGRGFGYEPQSPNAAPNGTTSKHVRQASRFSVNTSRHDGEENDELGFDGEEAEIRTNPSEDADASDFEEEPNEYGADHWRSRHNSVHLSAFGDGHDRYADDNQSHASNDDSLQDSLTPSDEQFSNPSDEEAAREERILRRQHRAAERAARRERKQRQRGRAYSDNTLPSSSIGEADIHHNGVYGQDEQQRNPRNGNTISNPSEQEHCDIDDDSQTFGHNDRSNMPDQGPQFSRDFRFPPLNPCTVDVDPQVQSSSVHSGNCPPMSGTLGRASGISLLNPDAKEFKFGGTSASTRSVSAPQPSMQTAPEAAGAHFRLPSIKTSSFGSSALGDAPTNAAHLNVGAAPFTPGLFTFKAIQRLQVPENSLSASPSIAVTSADGGADHRETENRDMQGREKRTRYGPIDYDSQDERSSVYSPSPPRPKASAATIEGPLRIFSSLARNSPQPFLPVGYSQQQRAVSHESRLTADAPSFVPTWAKSSQLLGGSTSFKRPSLPDWDQQGQQAVDKDLPSILDPTFFSRDVESKAIPVGRASKDDVRGAARPSLSSASTLASVDKQANKSAVEPSRAADVDSGQETSETHQAPFAWQPSASNRLAPRTQPMHIPSGPRSCHSPSISQTSDAGHVPSIRWGDRRTSSRMSMSSLDRRFRRSCRGKKGPDDVGGNDEDDYEDEEESVTDIIEEIVERMDKVLEGWAGKILDEVTIMGQVRPHPRNLASVSDFPLDQEKLVQDMFKRMEEALDSRLTPALFASHARRASDETQSTIRPLRQRNSSSDVKTANSSLADAPGEWDFDYVQDILDVKLGEFRNQIESTLAQVMAALDKNGHLGAAVKPNGNDKYTNDSGPLVDFAEVVTARLMTQLESTLQLHLHAAKEFQSASDVELQKAMQSKLDENLFLLSEKGATDRSSIQHMLESEMHGLERSFSKIVSSVEEHIRSALMLHLPPLLADKASSDGTLADRLTNQLGSALGPVLSEERRCMLEEHQRSRDLLLEALPSSTQIAQSTIKLVEPLVKSLKSEPIDSDALVKRLAEVIGKQSIEHLVDLNPVLALIEPLIVKHEEARAFSKKILQRQEDTERTLCELPGAINAKTEIFLSSANDTSERQGLILEKIAEIKAEIKDSSSTLSNAASLNTDALHRRLEDLAKDKILTRETAEKTLSELASVYQVLDSSYQALSRLEAQHTSSEESHRDATAWLEKQAQANADLAKELREAEARAARAEAGQAEAEAKLSSLGRESDSLRDQLAQLTAEFASFKAERTKEQEASEKAVADAMARVDRAEAASVETQDRMSRLLEQANVAEREAYDSAKSVLERASKAEGQVAALEKRIAEQDNKIGNLQQLSATQKQKAAQSHQKLAEGEKRVKELEGKAEELAEAAIRLRLLEEKANELEDVRRQLHDSVEREALMKKELTKYDDRFSEMETELVEIKDSFVERSVHEEVQRKYTESQKLVEQLEAKLQTLTASPLTFDGWEAVEKQKTGAWASMHAPRVHIEDVELVGRSSRSIRSVSFASTAGSQGKKEVEVDEGGWWS</sequence>
<accession>A0A0D1DRJ3</accession>